<accession>Q91VZ6</accession>
<accession>Q497I6</accession>
<accession>Q68EF3</accession>
<keyword id="KW-1003">Cell membrane</keyword>
<keyword id="KW-0343">GTPase activation</keyword>
<keyword id="KW-0472">Membrane</keyword>
<keyword id="KW-0479">Metal-binding</keyword>
<keyword id="KW-1185">Reference proteome</keyword>
<keyword id="KW-0862">Zinc</keyword>
<keyword id="KW-0863">Zinc-finger</keyword>
<organism>
    <name type="scientific">Mus musculus</name>
    <name type="common">Mouse</name>
    <dbReference type="NCBI Taxonomy" id="10090"/>
    <lineage>
        <taxon>Eukaryota</taxon>
        <taxon>Metazoa</taxon>
        <taxon>Chordata</taxon>
        <taxon>Craniata</taxon>
        <taxon>Vertebrata</taxon>
        <taxon>Euteleostomi</taxon>
        <taxon>Mammalia</taxon>
        <taxon>Eutheria</taxon>
        <taxon>Euarchontoglires</taxon>
        <taxon>Glires</taxon>
        <taxon>Rodentia</taxon>
        <taxon>Myomorpha</taxon>
        <taxon>Muroidea</taxon>
        <taxon>Muridae</taxon>
        <taxon>Murinae</taxon>
        <taxon>Mus</taxon>
        <taxon>Mus</taxon>
    </lineage>
</organism>
<protein>
    <recommendedName>
        <fullName>Stromal membrane-associated protein 1</fullName>
    </recommendedName>
</protein>
<name>SMAP1_MOUSE</name>
<feature type="chain" id="PRO_0000235839" description="Stromal membrane-associated protein 1">
    <location>
        <begin position="1"/>
        <end position="440"/>
    </location>
</feature>
<feature type="domain" description="Arf-GAP" evidence="1">
    <location>
        <begin position="18"/>
        <end position="143"/>
    </location>
</feature>
<feature type="zinc finger region" description="C4-type" evidence="1">
    <location>
        <begin position="33"/>
        <end position="56"/>
    </location>
</feature>
<feature type="region of interest" description="Disordered" evidence="2">
    <location>
        <begin position="140"/>
        <end position="211"/>
    </location>
</feature>
<feature type="region of interest" description="Disordered" evidence="2">
    <location>
        <begin position="410"/>
        <end position="440"/>
    </location>
</feature>
<feature type="short sequence motif" description="Interaction with clathrin heavy chains">
    <location>
        <begin position="192"/>
        <end position="196"/>
    </location>
</feature>
<feature type="compositionally biased region" description="Basic and acidic residues" evidence="2">
    <location>
        <begin position="140"/>
        <end position="158"/>
    </location>
</feature>
<feature type="compositionally biased region" description="Basic and acidic residues" evidence="2">
    <location>
        <begin position="165"/>
        <end position="178"/>
    </location>
</feature>
<feature type="compositionally biased region" description="Low complexity" evidence="2">
    <location>
        <begin position="420"/>
        <end position="440"/>
    </location>
</feature>
<feature type="mutagenesis site" description="Loss of GTPase activation." evidence="3">
    <original>R</original>
    <variation>Q</variation>
    <location>
        <position position="61"/>
    </location>
</feature>
<feature type="mutagenesis site" description="Loss of interaction with clathrin heavy chains." evidence="3">
    <original>LLGLD</original>
    <variation>AAAAA</variation>
    <location>
        <begin position="192"/>
        <end position="196"/>
    </location>
</feature>
<dbReference type="EMBL" id="BC006946">
    <property type="protein sequence ID" value="AAH06946.1"/>
    <property type="molecule type" value="mRNA"/>
</dbReference>
<dbReference type="EMBL" id="BC080286">
    <property type="protein sequence ID" value="AAH80286.1"/>
    <property type="molecule type" value="mRNA"/>
</dbReference>
<dbReference type="EMBL" id="BC100537">
    <property type="protein sequence ID" value="AAI00538.1"/>
    <property type="status" value="ALT_SEQ"/>
    <property type="molecule type" value="mRNA"/>
</dbReference>
<dbReference type="CCDS" id="CCDS14851.1"/>
<dbReference type="RefSeq" id="NP_001277612.1">
    <property type="nucleotide sequence ID" value="NM_001290683.1"/>
</dbReference>
<dbReference type="RefSeq" id="NP_082810.1">
    <property type="nucleotide sequence ID" value="NM_028534.4"/>
</dbReference>
<dbReference type="SMR" id="Q91VZ6"/>
<dbReference type="BioGRID" id="221043">
    <property type="interactions" value="15"/>
</dbReference>
<dbReference type="ELM" id="Q91VZ6"/>
<dbReference type="FunCoup" id="Q91VZ6">
    <property type="interactions" value="3265"/>
</dbReference>
<dbReference type="IntAct" id="Q91VZ6">
    <property type="interactions" value="13"/>
</dbReference>
<dbReference type="MINT" id="Q91VZ6"/>
<dbReference type="STRING" id="10090.ENSMUSP00000027339"/>
<dbReference type="GlyGen" id="Q91VZ6">
    <property type="glycosylation" value="1 site"/>
</dbReference>
<dbReference type="iPTMnet" id="Q91VZ6"/>
<dbReference type="PhosphoSitePlus" id="Q91VZ6"/>
<dbReference type="SwissPalm" id="Q91VZ6"/>
<dbReference type="jPOST" id="Q91VZ6"/>
<dbReference type="PaxDb" id="10090-ENSMUSP00000027339"/>
<dbReference type="PeptideAtlas" id="Q91VZ6"/>
<dbReference type="ProteomicsDB" id="261256"/>
<dbReference type="Pumba" id="Q91VZ6"/>
<dbReference type="Antibodypedia" id="31248">
    <property type="antibodies" value="146 antibodies from 25 providers"/>
</dbReference>
<dbReference type="DNASU" id="98366"/>
<dbReference type="Ensembl" id="ENSMUST00000027339.14">
    <property type="protein sequence ID" value="ENSMUSP00000027339.8"/>
    <property type="gene ID" value="ENSMUSG00000026155.14"/>
</dbReference>
<dbReference type="GeneID" id="98366"/>
<dbReference type="KEGG" id="mmu:98366"/>
<dbReference type="UCSC" id="uc007amg.2">
    <property type="organism name" value="mouse"/>
</dbReference>
<dbReference type="AGR" id="MGI:2138261"/>
<dbReference type="CTD" id="60682"/>
<dbReference type="MGI" id="MGI:2138261">
    <property type="gene designation" value="Smap1"/>
</dbReference>
<dbReference type="VEuPathDB" id="HostDB:ENSMUSG00000026155"/>
<dbReference type="eggNOG" id="KOG0703">
    <property type="taxonomic scope" value="Eukaryota"/>
</dbReference>
<dbReference type="GeneTree" id="ENSGT00940000155884"/>
<dbReference type="HOGENOM" id="CLU_023062_5_0_1"/>
<dbReference type="InParanoid" id="Q91VZ6"/>
<dbReference type="OMA" id="IPSNNGW"/>
<dbReference type="PhylomeDB" id="Q91VZ6"/>
<dbReference type="TreeFam" id="TF313876"/>
<dbReference type="BioGRID-ORCS" id="98366">
    <property type="hits" value="2 hits in 76 CRISPR screens"/>
</dbReference>
<dbReference type="ChiTaRS" id="Smap1">
    <property type="organism name" value="mouse"/>
</dbReference>
<dbReference type="PRO" id="PR:Q91VZ6"/>
<dbReference type="Proteomes" id="UP000000589">
    <property type="component" value="Chromosome 1"/>
</dbReference>
<dbReference type="RNAct" id="Q91VZ6">
    <property type="molecule type" value="protein"/>
</dbReference>
<dbReference type="Bgee" id="ENSMUSG00000026155">
    <property type="expression patterns" value="Expressed in blood and 263 other cell types or tissues"/>
</dbReference>
<dbReference type="ExpressionAtlas" id="Q91VZ6">
    <property type="expression patterns" value="baseline and differential"/>
</dbReference>
<dbReference type="GO" id="GO:0005737">
    <property type="term" value="C:cytoplasm"/>
    <property type="evidence" value="ECO:0000314"/>
    <property type="project" value="MGI"/>
</dbReference>
<dbReference type="GO" id="GO:0005886">
    <property type="term" value="C:plasma membrane"/>
    <property type="evidence" value="ECO:0007669"/>
    <property type="project" value="UniProtKB-SubCell"/>
</dbReference>
<dbReference type="GO" id="GO:0030276">
    <property type="term" value="F:clathrin binding"/>
    <property type="evidence" value="ECO:0000314"/>
    <property type="project" value="MGI"/>
</dbReference>
<dbReference type="GO" id="GO:0005096">
    <property type="term" value="F:GTPase activator activity"/>
    <property type="evidence" value="ECO:0000314"/>
    <property type="project" value="MGI"/>
</dbReference>
<dbReference type="GO" id="GO:0008270">
    <property type="term" value="F:zinc ion binding"/>
    <property type="evidence" value="ECO:0007669"/>
    <property type="project" value="UniProtKB-KW"/>
</dbReference>
<dbReference type="GO" id="GO:0045648">
    <property type="term" value="P:positive regulation of erythrocyte differentiation"/>
    <property type="evidence" value="ECO:0000314"/>
    <property type="project" value="MGI"/>
</dbReference>
<dbReference type="GO" id="GO:2000369">
    <property type="term" value="P:regulation of clathrin-dependent endocytosis"/>
    <property type="evidence" value="ECO:0000314"/>
    <property type="project" value="MGI"/>
</dbReference>
<dbReference type="CDD" id="cd08839">
    <property type="entry name" value="ArfGap_SMAP"/>
    <property type="match status" value="1"/>
</dbReference>
<dbReference type="FunFam" id="1.10.220.150:FF:000009">
    <property type="entry name" value="stromal membrane-associated protein 1 isoform X1"/>
    <property type="match status" value="1"/>
</dbReference>
<dbReference type="Gene3D" id="1.10.220.150">
    <property type="entry name" value="Arf GTPase activating protein"/>
    <property type="match status" value="1"/>
</dbReference>
<dbReference type="InterPro" id="IPR051718">
    <property type="entry name" value="ARF_GTPase-activating"/>
</dbReference>
<dbReference type="InterPro" id="IPR037278">
    <property type="entry name" value="ARFGAP/RecO"/>
</dbReference>
<dbReference type="InterPro" id="IPR001164">
    <property type="entry name" value="ArfGAP_dom"/>
</dbReference>
<dbReference type="InterPro" id="IPR038508">
    <property type="entry name" value="ArfGAP_dom_sf"/>
</dbReference>
<dbReference type="InterPro" id="IPR044732">
    <property type="entry name" value="ArfGAP_SMAP1-like"/>
</dbReference>
<dbReference type="PANTHER" id="PTHR45705">
    <property type="entry name" value="FI20236P1"/>
    <property type="match status" value="1"/>
</dbReference>
<dbReference type="PANTHER" id="PTHR45705:SF8">
    <property type="entry name" value="STROMAL MEMBRANE-ASSOCIATED PROTEIN 1"/>
    <property type="match status" value="1"/>
</dbReference>
<dbReference type="Pfam" id="PF01412">
    <property type="entry name" value="ArfGap"/>
    <property type="match status" value="1"/>
</dbReference>
<dbReference type="PRINTS" id="PR00405">
    <property type="entry name" value="REVINTRACTNG"/>
</dbReference>
<dbReference type="SMART" id="SM00105">
    <property type="entry name" value="ArfGap"/>
    <property type="match status" value="1"/>
</dbReference>
<dbReference type="SUPFAM" id="SSF57863">
    <property type="entry name" value="ArfGap/RecO-like zinc finger"/>
    <property type="match status" value="1"/>
</dbReference>
<dbReference type="PROSITE" id="PS50115">
    <property type="entry name" value="ARFGAP"/>
    <property type="match status" value="1"/>
</dbReference>
<sequence>MATRSCREKAQKLNEQHQLILSKLLREEDNKYCADCEAKGPRWASWNIGVFICIRCAGIHRNLGVHISRVKSVNLDQWTPEQIQCMQDMGNTKARLLYEANLPENFRRPQTDQAVEFFIRDKYEKKKYYDKNAIAITNKEKEKKKDEKKREKEPEKPAKPLTTEKLPKKEEQQLEPKKSTSPKNAAEPTIDLLGLDGPAEAPVTNGNPATAPALSDDLDIFGPMISNPLPAAVMPPAQGTASVPAPATLSTVTSGDLDLFTEQTTKSEEVAKKQLSKDSILSLYGTGAQQSTPGVFMGPTNIPFTSQAPTAFQGFPSMGVPVPAAPGLIGNMMGQNTGMMVGMPMHNGFMGNAQTGVMPLPQNVVGPQGGMVGQMGAPQSKFGLPQAQQPQWNLSQMNQQMAAMNLSSANASAGFGQPPSTTAGWSGSSSGQTLSTQLWK</sequence>
<reference key="1">
    <citation type="journal article" date="2004" name="Genome Res.">
        <title>The status, quality, and expansion of the NIH full-length cDNA project: the Mammalian Gene Collection (MGC).</title>
        <authorList>
            <consortium name="The MGC Project Team"/>
        </authorList>
    </citation>
    <scope>NUCLEOTIDE SEQUENCE [LARGE SCALE MRNA]</scope>
    <source>
        <strain>FVB/N</strain>
        <tissue>Brain</tissue>
        <tissue>Jaw</tissue>
        <tissue>Limb</tissue>
        <tissue>Mammary tumor</tissue>
    </source>
</reference>
<reference key="2">
    <citation type="journal article" date="1998" name="J. Biochem.">
        <title>Involvement of stromal membrane-associated protein (SMAP-1) in erythropoietic microenvironment.</title>
        <authorList>
            <person name="Sato Y."/>
            <person name="Hong H.N."/>
            <person name="Yanai N."/>
            <person name="Obinata M."/>
        </authorList>
    </citation>
    <scope>FUNCTION</scope>
    <scope>SUBCELLULAR LOCATION</scope>
    <scope>DEVELOPMENTAL STAGE</scope>
    <scope>TISSUE SPECIFICITY</scope>
</reference>
<reference key="3">
    <citation type="journal article" date="2005" name="Mol. Biol. Cell">
        <title>A novel GTPase-activating protein for ARF6 directly interacts with clathrin and regulates clathrin-dependent endocytosis.</title>
        <authorList>
            <person name="Tanabe K."/>
            <person name="Torii T."/>
            <person name="Natsume W."/>
            <person name="Braesch-Andersen S."/>
            <person name="Watanabe T."/>
            <person name="Satake M."/>
        </authorList>
    </citation>
    <scope>FUNCTION</scope>
    <scope>INTERACTION WITH ARF6 AND CLATHRIN HEAVY CHAINS</scope>
    <scope>MUTAGENESIS OF ARG-61 AND 192-LEU--ASP-196</scope>
</reference>
<reference key="4">
    <citation type="journal article" date="2010" name="Cell">
        <title>A tissue-specific atlas of mouse protein phosphorylation and expression.</title>
        <authorList>
            <person name="Huttlin E.L."/>
            <person name="Jedrychowski M.P."/>
            <person name="Elias J.E."/>
            <person name="Goswami T."/>
            <person name="Rad R."/>
            <person name="Beausoleil S.A."/>
            <person name="Villen J."/>
            <person name="Haas W."/>
            <person name="Sowa M.E."/>
            <person name="Gygi S.P."/>
        </authorList>
    </citation>
    <scope>IDENTIFICATION BY MASS SPECTROMETRY [LARGE SCALE ANALYSIS]</scope>
    <source>
        <tissue>Brain</tissue>
        <tissue>Kidney</tissue>
        <tissue>Lung</tissue>
        <tissue>Spleen</tissue>
        <tissue>Testis</tissue>
    </source>
</reference>
<gene>
    <name type="primary">Smap1</name>
</gene>
<evidence type="ECO:0000255" key="1">
    <source>
        <dbReference type="PROSITE-ProRule" id="PRU00288"/>
    </source>
</evidence>
<evidence type="ECO:0000256" key="2">
    <source>
        <dbReference type="SAM" id="MobiDB-lite"/>
    </source>
</evidence>
<evidence type="ECO:0000269" key="3">
    <source>
    </source>
</evidence>
<evidence type="ECO:0000269" key="4">
    <source>
    </source>
</evidence>
<evidence type="ECO:0000305" key="5"/>
<evidence type="ECO:0000305" key="6">
    <source>
    </source>
</evidence>
<comment type="function">
    <text evidence="3 4">GTPase activating protein that acts on ARF6. Plays a role in clathrin-dependent endocytosis. May play a role in erythropoiesis.</text>
</comment>
<comment type="subunit">
    <text evidence="3">Interacts with ARF6. Interacts with clathrin heavy chains via the clathrin box-like motif.</text>
</comment>
<comment type="interaction">
    <interactant intactId="EBI-8317690">
        <id>Q91VZ6</id>
    </interactant>
    <interactant intactId="EBI-11358641">
        <id>Q7TN29</id>
        <label>Smap2</label>
    </interactant>
    <organismsDiffer>false</organismsDiffer>
    <experiments>4</experiments>
</comment>
<comment type="subcellular location">
    <subcellularLocation>
        <location evidence="6">Cell membrane</location>
        <topology evidence="6">Peripheral membrane protein</topology>
        <orientation evidence="6">Cytoplasmic side</orientation>
    </subcellularLocation>
</comment>
<comment type="tissue specificity">
    <text evidence="4">Detected in adult brain, lung, heart, liver, ovary and bone marrow. Detected in stromal cells of the red pulp of adult spleen.</text>
</comment>
<comment type="developmental stage">
    <text evidence="4">Detected in stromal cells of fetal liver at 10.5 days. Expression was maximal after 14 days of development and decreased thereafter. Detected at low levels after 18 days.</text>
</comment>
<comment type="sequence caution" evidence="5">
    <conflict type="miscellaneous discrepancy">
        <sequence resource="EMBL-CDS" id="AAI00538"/>
    </conflict>
    <text>Contaminating sequence. Potential poly-A sequence.</text>
</comment>
<proteinExistence type="evidence at protein level"/>